<evidence type="ECO:0000255" key="1">
    <source>
        <dbReference type="HAMAP-Rule" id="MF_01709"/>
    </source>
</evidence>
<reference key="1">
    <citation type="journal article" date="2005" name="Nucleic Acids Res.">
        <title>Genome dynamics and diversity of Shigella species, the etiologic agents of bacillary dysentery.</title>
        <authorList>
            <person name="Yang F."/>
            <person name="Yang J."/>
            <person name="Zhang X."/>
            <person name="Chen L."/>
            <person name="Jiang Y."/>
            <person name="Yan Y."/>
            <person name="Tang X."/>
            <person name="Wang J."/>
            <person name="Xiong Z."/>
            <person name="Dong J."/>
            <person name="Xue Y."/>
            <person name="Zhu Y."/>
            <person name="Xu X."/>
            <person name="Sun L."/>
            <person name="Chen S."/>
            <person name="Nie H."/>
            <person name="Peng J."/>
            <person name="Xu J."/>
            <person name="Wang Y."/>
            <person name="Yuan Z."/>
            <person name="Wen Y."/>
            <person name="Yao Z."/>
            <person name="Shen Y."/>
            <person name="Qiang B."/>
            <person name="Hou Y."/>
            <person name="Yu J."/>
            <person name="Jin Q."/>
        </authorList>
    </citation>
    <scope>NUCLEOTIDE SEQUENCE [LARGE SCALE GENOMIC DNA]</scope>
    <source>
        <strain>Ss046</strain>
    </source>
</reference>
<name>MALK_SHISS</name>
<dbReference type="EC" id="7.5.2.1" evidence="1"/>
<dbReference type="EMBL" id="CP000038">
    <property type="protein sequence ID" value="AAZ90712.1"/>
    <property type="molecule type" value="Genomic_DNA"/>
</dbReference>
<dbReference type="RefSeq" id="WP_000179165.1">
    <property type="nucleotide sequence ID" value="NC_007384.1"/>
</dbReference>
<dbReference type="SMR" id="Q3YUV0"/>
<dbReference type="GeneID" id="93777800"/>
<dbReference type="KEGG" id="ssn:SSON_4213"/>
<dbReference type="HOGENOM" id="CLU_000604_1_1_6"/>
<dbReference type="Proteomes" id="UP000002529">
    <property type="component" value="Chromosome"/>
</dbReference>
<dbReference type="GO" id="GO:0055052">
    <property type="term" value="C:ATP-binding cassette (ABC) transporter complex, substrate-binding subunit-containing"/>
    <property type="evidence" value="ECO:0007669"/>
    <property type="project" value="TreeGrafter"/>
</dbReference>
<dbReference type="GO" id="GO:1990060">
    <property type="term" value="C:maltose transport complex"/>
    <property type="evidence" value="ECO:0007669"/>
    <property type="project" value="TreeGrafter"/>
</dbReference>
<dbReference type="GO" id="GO:0015423">
    <property type="term" value="F:ABC-type maltose transporter activity"/>
    <property type="evidence" value="ECO:0007669"/>
    <property type="project" value="UniProtKB-EC"/>
</dbReference>
<dbReference type="GO" id="GO:0005524">
    <property type="term" value="F:ATP binding"/>
    <property type="evidence" value="ECO:0007669"/>
    <property type="project" value="UniProtKB-KW"/>
</dbReference>
<dbReference type="GO" id="GO:0016887">
    <property type="term" value="F:ATP hydrolysis activity"/>
    <property type="evidence" value="ECO:0007669"/>
    <property type="project" value="InterPro"/>
</dbReference>
<dbReference type="CDD" id="cd03301">
    <property type="entry name" value="ABC_MalK_N"/>
    <property type="match status" value="1"/>
</dbReference>
<dbReference type="FunFam" id="3.40.50.300:FF:000042">
    <property type="entry name" value="Maltose/maltodextrin ABC transporter, ATP-binding protein"/>
    <property type="match status" value="1"/>
</dbReference>
<dbReference type="FunFam" id="2.40.50.100:FF:000014">
    <property type="entry name" value="Maltose/maltodextrin import ATP-binding protein MalK"/>
    <property type="match status" value="1"/>
</dbReference>
<dbReference type="FunFam" id="2.40.50.140:FF:000070">
    <property type="entry name" value="Maltose/maltodextrin import ATP-binding protein MalK"/>
    <property type="match status" value="1"/>
</dbReference>
<dbReference type="Gene3D" id="2.40.50.100">
    <property type="match status" value="1"/>
</dbReference>
<dbReference type="Gene3D" id="2.40.50.140">
    <property type="entry name" value="Nucleic acid-binding proteins"/>
    <property type="match status" value="1"/>
</dbReference>
<dbReference type="Gene3D" id="3.40.50.300">
    <property type="entry name" value="P-loop containing nucleotide triphosphate hydrolases"/>
    <property type="match status" value="1"/>
</dbReference>
<dbReference type="InterPro" id="IPR003593">
    <property type="entry name" value="AAA+_ATPase"/>
</dbReference>
<dbReference type="InterPro" id="IPR003439">
    <property type="entry name" value="ABC_transporter-like_ATP-bd"/>
</dbReference>
<dbReference type="InterPro" id="IPR017871">
    <property type="entry name" value="ABC_transporter-like_CS"/>
</dbReference>
<dbReference type="InterPro" id="IPR015855">
    <property type="entry name" value="ABC_transpr_MalK-like"/>
</dbReference>
<dbReference type="InterPro" id="IPR047641">
    <property type="entry name" value="ABC_transpr_MalK/UgpC-like"/>
</dbReference>
<dbReference type="InterPro" id="IPR008995">
    <property type="entry name" value="Mo/tungstate-bd_C_term_dom"/>
</dbReference>
<dbReference type="InterPro" id="IPR012340">
    <property type="entry name" value="NA-bd_OB-fold"/>
</dbReference>
<dbReference type="InterPro" id="IPR027417">
    <property type="entry name" value="P-loop_NTPase"/>
</dbReference>
<dbReference type="InterPro" id="IPR013611">
    <property type="entry name" value="Transp-assoc_OB_typ2"/>
</dbReference>
<dbReference type="NCBIfam" id="NF008233">
    <property type="entry name" value="PRK11000.1"/>
    <property type="match status" value="1"/>
</dbReference>
<dbReference type="NCBIfam" id="NF008653">
    <property type="entry name" value="PRK11650.1"/>
    <property type="match status" value="1"/>
</dbReference>
<dbReference type="PANTHER" id="PTHR43875">
    <property type="entry name" value="MALTODEXTRIN IMPORT ATP-BINDING PROTEIN MSMX"/>
    <property type="match status" value="1"/>
</dbReference>
<dbReference type="PANTHER" id="PTHR43875:SF3">
    <property type="entry name" value="MALTOSE_MALTODEXTRIN IMPORT ATP-BINDING PROTEIN MALK"/>
    <property type="match status" value="1"/>
</dbReference>
<dbReference type="Pfam" id="PF00005">
    <property type="entry name" value="ABC_tran"/>
    <property type="match status" value="1"/>
</dbReference>
<dbReference type="Pfam" id="PF08402">
    <property type="entry name" value="TOBE_2"/>
    <property type="match status" value="1"/>
</dbReference>
<dbReference type="SMART" id="SM00382">
    <property type="entry name" value="AAA"/>
    <property type="match status" value="1"/>
</dbReference>
<dbReference type="SUPFAM" id="SSF50331">
    <property type="entry name" value="MOP-like"/>
    <property type="match status" value="1"/>
</dbReference>
<dbReference type="SUPFAM" id="SSF52540">
    <property type="entry name" value="P-loop containing nucleoside triphosphate hydrolases"/>
    <property type="match status" value="1"/>
</dbReference>
<dbReference type="PROSITE" id="PS00211">
    <property type="entry name" value="ABC_TRANSPORTER_1"/>
    <property type="match status" value="1"/>
</dbReference>
<dbReference type="PROSITE" id="PS50893">
    <property type="entry name" value="ABC_TRANSPORTER_2"/>
    <property type="match status" value="1"/>
</dbReference>
<dbReference type="PROSITE" id="PS51245">
    <property type="entry name" value="MALK"/>
    <property type="match status" value="1"/>
</dbReference>
<organism>
    <name type="scientific">Shigella sonnei (strain Ss046)</name>
    <dbReference type="NCBI Taxonomy" id="300269"/>
    <lineage>
        <taxon>Bacteria</taxon>
        <taxon>Pseudomonadati</taxon>
        <taxon>Pseudomonadota</taxon>
        <taxon>Gammaproteobacteria</taxon>
        <taxon>Enterobacterales</taxon>
        <taxon>Enterobacteriaceae</taxon>
        <taxon>Shigella</taxon>
    </lineage>
</organism>
<proteinExistence type="inferred from homology"/>
<accession>Q3YUV0</accession>
<feature type="chain" id="PRO_0000274000" description="Maltose/maltodextrin import ATP-binding protein MalK">
    <location>
        <begin position="1"/>
        <end position="371"/>
    </location>
</feature>
<feature type="domain" description="ABC transporter" evidence="1">
    <location>
        <begin position="4"/>
        <end position="234"/>
    </location>
</feature>
<feature type="binding site" evidence="1">
    <location>
        <begin position="36"/>
        <end position="43"/>
    </location>
    <ligand>
        <name>ATP</name>
        <dbReference type="ChEBI" id="CHEBI:30616"/>
    </ligand>
</feature>
<gene>
    <name evidence="1" type="primary">malK</name>
    <name type="ordered locus">SSON_4213</name>
</gene>
<protein>
    <recommendedName>
        <fullName evidence="1">Maltose/maltodextrin import ATP-binding protein MalK</fullName>
        <ecNumber evidence="1">7.5.2.1</ecNumber>
    </recommendedName>
</protein>
<comment type="function">
    <text evidence="1">Part of the ABC transporter complex MalEFGK involved in maltose/maltodextrin import. Responsible for energy coupling to the transport system.</text>
</comment>
<comment type="catalytic activity">
    <reaction evidence="1">
        <text>D-maltose(out) + ATP + H2O = D-maltose(in) + ADP + phosphate + H(+)</text>
        <dbReference type="Rhea" id="RHEA:22132"/>
        <dbReference type="ChEBI" id="CHEBI:15377"/>
        <dbReference type="ChEBI" id="CHEBI:15378"/>
        <dbReference type="ChEBI" id="CHEBI:17306"/>
        <dbReference type="ChEBI" id="CHEBI:30616"/>
        <dbReference type="ChEBI" id="CHEBI:43474"/>
        <dbReference type="ChEBI" id="CHEBI:456216"/>
        <dbReference type="EC" id="7.5.2.1"/>
    </reaction>
</comment>
<comment type="subunit">
    <text evidence="1">The complex is composed of two ATP-binding proteins (MalK), two transmembrane proteins (MalG and MalK) and a solute-binding protein (MalE).</text>
</comment>
<comment type="subcellular location">
    <subcellularLocation>
        <location evidence="1">Cell inner membrane</location>
        <topology evidence="1">Peripheral membrane protein</topology>
    </subcellularLocation>
</comment>
<comment type="similarity">
    <text evidence="1">Belongs to the ABC transporter superfamily. Maltooligosaccharide importer (TC 3.A.1.1.1) family.</text>
</comment>
<keyword id="KW-0067">ATP-binding</keyword>
<keyword id="KW-0997">Cell inner membrane</keyword>
<keyword id="KW-1003">Cell membrane</keyword>
<keyword id="KW-0472">Membrane</keyword>
<keyword id="KW-0547">Nucleotide-binding</keyword>
<keyword id="KW-1185">Reference proteome</keyword>
<keyword id="KW-0762">Sugar transport</keyword>
<keyword id="KW-1278">Translocase</keyword>
<keyword id="KW-0813">Transport</keyword>
<sequence>MASVQLQNVTKAWGEVVVSKDINLDIHEGEFVVFVGPSGCGKSTLLRMIAGLETITSGDLFIGEKRMNDTPPAERGVGMVFQSYALYPHLSVAENMSFGLKLAGAKKEVINQRVNQVAEVLQLAHLLDRKPKALSGGQRQRVAIGRTLVAEPSVFLLDEPLSNLDAALRVQMRIEISRLHKRLGRTMIYVTHDQVEAMTLADKIVVLDAGRVAQVGKPLELYHYPADRFVAGFIGSPKMNFLPVKVTATAIDQVQVELPMPNRQQVWLPVESRDVQVGANMSLGIRPEHLLPSDIADVILEGEVQVVEQLGNETQIHIQIPSIRQNLVYRQNDVVLVEEGATFAIGLPPERCHLFREDGTACRRLHKEPGV</sequence>